<evidence type="ECO:0000250" key="1">
    <source>
        <dbReference type="UniProtKB" id="Q38503"/>
    </source>
</evidence>
<evidence type="ECO:0000269" key="2">
    <source>
    </source>
</evidence>
<evidence type="ECO:0000305" key="3"/>
<evidence type="ECO:0007744" key="4">
    <source>
        <dbReference type="PDB" id="4L5N"/>
    </source>
</evidence>
<evidence type="ECO:0007829" key="5">
    <source>
        <dbReference type="PDB" id="4L5N"/>
    </source>
</evidence>
<organism>
    <name type="scientific">Bacillus phage PZA</name>
    <name type="common">Bacteriophage PZA</name>
    <dbReference type="NCBI Taxonomy" id="10757"/>
    <lineage>
        <taxon>Viruses</taxon>
        <taxon>Duplodnaviria</taxon>
        <taxon>Heunggongvirae</taxon>
        <taxon>Uroviricota</taxon>
        <taxon>Caudoviricetes</taxon>
        <taxon>Salasmaviridae</taxon>
        <taxon>Picovirinae</taxon>
        <taxon>Salasvirus</taxon>
        <taxon>Salasvirus PZA</taxon>
    </lineage>
</organism>
<sequence length="56" mass="6580">MVQNDFLDSYDVTMLLQDDNGKQYYEYHKGLSLSDFEVLYGNTVDEIIKLRVDKIS</sequence>
<dbReference type="EMBL" id="M11813">
    <property type="protein sequence ID" value="AAA88480.1"/>
    <property type="molecule type" value="Genomic_DNA"/>
</dbReference>
<dbReference type="PIR" id="B24528">
    <property type="entry name" value="ERBP1B"/>
</dbReference>
<dbReference type="PDB" id="4L5N">
    <property type="method" value="X-ray"/>
    <property type="resolution" value="2.16 A"/>
    <property type="chains" value="C/D/E/F=2-56"/>
</dbReference>
<dbReference type="PDBsum" id="4L5N"/>
<dbReference type="SMR" id="P06948"/>
<dbReference type="Proteomes" id="UP000000855">
    <property type="component" value="Segment"/>
</dbReference>
<dbReference type="Gene3D" id="6.20.250.30">
    <property type="match status" value="1"/>
</dbReference>
<dbReference type="InterPro" id="IPR049384">
    <property type="entry name" value="P56"/>
</dbReference>
<dbReference type="InterPro" id="IPR053744">
    <property type="entry name" value="UDG_Inhib_phi29likevirus"/>
</dbReference>
<dbReference type="Pfam" id="PF20763">
    <property type="entry name" value="UDG-inhib_P56"/>
    <property type="match status" value="1"/>
</dbReference>
<feature type="chain" id="PRO_0000106550" description="Protein p56">
    <location>
        <begin position="1"/>
        <end position="56"/>
    </location>
</feature>
<feature type="strand" evidence="5">
    <location>
        <begin position="10"/>
        <end position="17"/>
    </location>
</feature>
<feature type="strand" evidence="5">
    <location>
        <begin position="23"/>
        <end position="31"/>
    </location>
</feature>
<feature type="helix" evidence="5">
    <location>
        <begin position="33"/>
        <end position="42"/>
    </location>
</feature>
<feature type="strand" evidence="5">
    <location>
        <begin position="45"/>
        <end position="54"/>
    </location>
</feature>
<protein>
    <recommendedName>
        <fullName evidence="1">Protein p56</fullName>
    </recommendedName>
</protein>
<name>P56_BPPZA</name>
<gene>
    <name type="primary">1B</name>
</gene>
<reference key="1">
    <citation type="journal article" date="1985" name="Gene">
        <title>Nucleotide sequence of the major early region of Bacillus subtilis phage PZA, a close relative of phi 29.</title>
        <authorList>
            <person name="Paces V."/>
            <person name="Vlcek C."/>
            <person name="Urbanek P."/>
            <person name="Hostomsky Z."/>
        </authorList>
    </citation>
    <scope>NUCLEOTIDE SEQUENCE [GENOMIC DNA]</scope>
</reference>
<reference evidence="4" key="2">
    <citation type="journal article" date="2013" name="Nucleic Acids Res.">
        <title>Architecturally diverse proteins converge on an analogous mechanism to inactivate Uracil-DNA glycosylase.</title>
        <authorList>
            <person name="Cole A.R."/>
            <person name="Ofer S."/>
            <person name="Ryzhenkova K."/>
            <person name="Baltulionis G."/>
            <person name="Hornyak P."/>
            <person name="Savva R."/>
        </authorList>
    </citation>
    <scope>X-RAY CRYSTALLOGRAPHY (2.16 ANGSTROMS) OF 2-56</scope>
</reference>
<organismHost>
    <name type="scientific">Bacillus subtilis</name>
    <dbReference type="NCBI Taxonomy" id="1423"/>
</organismHost>
<accession>P06948</accession>
<proteinExistence type="evidence at protein level"/>
<comment type="function">
    <text evidence="1">Inhibits the host uracil-DNA glycosylase (UDG), an enzyme which removes uracil residues from DNA by the base excision repair. Interacts with host uracil-DNA glycosylase and prevents the latter from binding to DNA. Since the viral DNA polymerase efficiently incorporates dUMP into DNA, the virus needs to prevent the deleterious effect caused by host UDG when it eliminates uracil residues present in the viral genome.</text>
</comment>
<comment type="subunit">
    <text evidence="2">Homodimer (PubMed:23892286). Interacts with host UDG; this interaction inhibits the uracil-DNA glycosylase (PubMed:23892286).</text>
</comment>
<comment type="similarity">
    <text evidence="3">Belongs to the phi29likevirus protein p56 family.</text>
</comment>
<keyword id="KW-0002">3D-structure</keyword>
<keyword id="KW-0244">Early protein</keyword>
<keyword id="KW-0945">Host-virus interaction</keyword>